<evidence type="ECO:0000255" key="1">
    <source>
        <dbReference type="HAMAP-Rule" id="MF_00197"/>
    </source>
</evidence>
<evidence type="ECO:0000256" key="2">
    <source>
        <dbReference type="SAM" id="MobiDB-lite"/>
    </source>
</evidence>
<protein>
    <recommendedName>
        <fullName evidence="1">Diaminopimelate epimerase</fullName>
        <shortName evidence="1">DAP epimerase</shortName>
        <ecNumber evidence="1">5.1.1.7</ecNumber>
    </recommendedName>
    <alternativeName>
        <fullName evidence="1">PLP-independent amino acid racemase</fullName>
    </alternativeName>
</protein>
<sequence length="303" mass="32368">MATKAAFARMNGLGNQIIVADMRGRADSITSAAAIRLASDSETAFDQIMAIHDPRTPGTDYYIAIINCDGTQAQACGNGTRCVVQALAAETGRHAFTFETRAGILTATEHDDGLISVDMGTPRFDWQDIPLAQAVADTRKIELQVDPADAPVLHSPSIASMGNPHAVFWVDKDVWSYELDKFGPLLENHPIFPERANISIAHVTSSDTIDLRTWERGAGLTRACGSAACAAAVSAARTGRTGRKVTVNVPGGPLLIEWRDDDHVMMTGPAEWEFSGTFDPATGEWSRDTQGLQGSGNADRGAA</sequence>
<feature type="chain" id="PRO_0000149823" description="Diaminopimelate epimerase">
    <location>
        <begin position="1"/>
        <end position="303"/>
    </location>
</feature>
<feature type="region of interest" description="Disordered" evidence="2">
    <location>
        <begin position="278"/>
        <end position="303"/>
    </location>
</feature>
<feature type="active site" description="Proton donor" evidence="1">
    <location>
        <position position="76"/>
    </location>
</feature>
<feature type="active site" description="Proton acceptor" evidence="1">
    <location>
        <position position="224"/>
    </location>
</feature>
<feature type="binding site" evidence="1">
    <location>
        <position position="15"/>
    </location>
    <ligand>
        <name>substrate</name>
    </ligand>
</feature>
<feature type="binding site" evidence="1">
    <location>
        <position position="47"/>
    </location>
    <ligand>
        <name>substrate</name>
    </ligand>
</feature>
<feature type="binding site" evidence="1">
    <location>
        <position position="67"/>
    </location>
    <ligand>
        <name>substrate</name>
    </ligand>
</feature>
<feature type="binding site" evidence="1">
    <location>
        <begin position="77"/>
        <end position="78"/>
    </location>
    <ligand>
        <name>substrate</name>
    </ligand>
</feature>
<feature type="binding site" evidence="1">
    <location>
        <position position="163"/>
    </location>
    <ligand>
        <name>substrate</name>
    </ligand>
</feature>
<feature type="binding site" evidence="1">
    <location>
        <position position="197"/>
    </location>
    <ligand>
        <name>substrate</name>
    </ligand>
</feature>
<feature type="binding site" evidence="1">
    <location>
        <begin position="215"/>
        <end position="216"/>
    </location>
    <ligand>
        <name>substrate</name>
    </ligand>
</feature>
<feature type="binding site" evidence="1">
    <location>
        <begin position="225"/>
        <end position="226"/>
    </location>
    <ligand>
        <name>substrate</name>
    </ligand>
</feature>
<feature type="site" description="Could be important to modulate the pK values of the two catalytic cysteine residues" evidence="1">
    <location>
        <position position="165"/>
    </location>
</feature>
<feature type="site" description="Could be important to modulate the pK values of the two catalytic cysteine residues" evidence="1">
    <location>
        <position position="215"/>
    </location>
</feature>
<accession>Q8YJF0</accession>
<keyword id="KW-0028">Amino-acid biosynthesis</keyword>
<keyword id="KW-0963">Cytoplasm</keyword>
<keyword id="KW-0413">Isomerase</keyword>
<keyword id="KW-0457">Lysine biosynthesis</keyword>
<reference key="1">
    <citation type="journal article" date="2002" name="Proc. Natl. Acad. Sci. U.S.A.">
        <title>The genome sequence of the facultative intracellular pathogen Brucella melitensis.</title>
        <authorList>
            <person name="DelVecchio V.G."/>
            <person name="Kapatral V."/>
            <person name="Redkar R.J."/>
            <person name="Patra G."/>
            <person name="Mujer C."/>
            <person name="Los T."/>
            <person name="Ivanova N."/>
            <person name="Anderson I."/>
            <person name="Bhattacharyya A."/>
            <person name="Lykidis A."/>
            <person name="Reznik G."/>
            <person name="Jablonski L."/>
            <person name="Larsen N."/>
            <person name="D'Souza M."/>
            <person name="Bernal A."/>
            <person name="Mazur M."/>
            <person name="Goltsman E."/>
            <person name="Selkov E."/>
            <person name="Elzer P.H."/>
            <person name="Hagius S."/>
            <person name="O'Callaghan D."/>
            <person name="Letesson J.-J."/>
            <person name="Haselkorn R."/>
            <person name="Kyrpides N.C."/>
            <person name="Overbeek R."/>
        </authorList>
    </citation>
    <scope>NUCLEOTIDE SEQUENCE [LARGE SCALE GENOMIC DNA]</scope>
    <source>
        <strain>ATCC 23456 / CCUG 17765 / NCTC 10094 / 16M</strain>
    </source>
</reference>
<gene>
    <name evidence="1" type="primary">dapF</name>
    <name type="ordered locus">BMEI0133</name>
</gene>
<dbReference type="EC" id="5.1.1.7" evidence="1"/>
<dbReference type="EMBL" id="AE008917">
    <property type="protein sequence ID" value="AAL51315.1"/>
    <property type="molecule type" value="Genomic_DNA"/>
</dbReference>
<dbReference type="PIR" id="AH3268">
    <property type="entry name" value="AH3268"/>
</dbReference>
<dbReference type="RefSeq" id="WP_004684460.1">
    <property type="nucleotide sequence ID" value="NC_003317.1"/>
</dbReference>
<dbReference type="SMR" id="Q8YJF0"/>
<dbReference type="GeneID" id="29593407"/>
<dbReference type="KEGG" id="bme:BMEI0133"/>
<dbReference type="KEGG" id="bmel:DK63_1301"/>
<dbReference type="PATRIC" id="fig|224914.52.peg.1373"/>
<dbReference type="eggNOG" id="COG0253">
    <property type="taxonomic scope" value="Bacteria"/>
</dbReference>
<dbReference type="PhylomeDB" id="Q8YJF0"/>
<dbReference type="UniPathway" id="UPA00034">
    <property type="reaction ID" value="UER00025"/>
</dbReference>
<dbReference type="Proteomes" id="UP000000419">
    <property type="component" value="Chromosome I"/>
</dbReference>
<dbReference type="GO" id="GO:0005829">
    <property type="term" value="C:cytosol"/>
    <property type="evidence" value="ECO:0007669"/>
    <property type="project" value="TreeGrafter"/>
</dbReference>
<dbReference type="GO" id="GO:0008837">
    <property type="term" value="F:diaminopimelate epimerase activity"/>
    <property type="evidence" value="ECO:0007669"/>
    <property type="project" value="UniProtKB-UniRule"/>
</dbReference>
<dbReference type="GO" id="GO:0009089">
    <property type="term" value="P:lysine biosynthetic process via diaminopimelate"/>
    <property type="evidence" value="ECO:0007669"/>
    <property type="project" value="UniProtKB-UniRule"/>
</dbReference>
<dbReference type="Gene3D" id="3.10.310.10">
    <property type="entry name" value="Diaminopimelate Epimerase, Chain A, domain 1"/>
    <property type="match status" value="2"/>
</dbReference>
<dbReference type="HAMAP" id="MF_00197">
    <property type="entry name" value="DAP_epimerase"/>
    <property type="match status" value="1"/>
</dbReference>
<dbReference type="InterPro" id="IPR018510">
    <property type="entry name" value="DAP_epimerase_AS"/>
</dbReference>
<dbReference type="InterPro" id="IPR001653">
    <property type="entry name" value="DAP_epimerase_DapF"/>
</dbReference>
<dbReference type="NCBIfam" id="TIGR00652">
    <property type="entry name" value="DapF"/>
    <property type="match status" value="1"/>
</dbReference>
<dbReference type="PANTHER" id="PTHR31689:SF0">
    <property type="entry name" value="DIAMINOPIMELATE EPIMERASE"/>
    <property type="match status" value="1"/>
</dbReference>
<dbReference type="PANTHER" id="PTHR31689">
    <property type="entry name" value="DIAMINOPIMELATE EPIMERASE, CHLOROPLASTIC"/>
    <property type="match status" value="1"/>
</dbReference>
<dbReference type="Pfam" id="PF01678">
    <property type="entry name" value="DAP_epimerase"/>
    <property type="match status" value="2"/>
</dbReference>
<dbReference type="SUPFAM" id="SSF54506">
    <property type="entry name" value="Diaminopimelate epimerase-like"/>
    <property type="match status" value="2"/>
</dbReference>
<dbReference type="PROSITE" id="PS01326">
    <property type="entry name" value="DAP_EPIMERASE"/>
    <property type="match status" value="1"/>
</dbReference>
<proteinExistence type="inferred from homology"/>
<comment type="function">
    <text evidence="1">Catalyzes the stereoinversion of LL-2,6-diaminopimelate (L,L-DAP) to meso-diaminopimelate (meso-DAP), a precursor of L-lysine and an essential component of the bacterial peptidoglycan.</text>
</comment>
<comment type="catalytic activity">
    <reaction evidence="1">
        <text>(2S,6S)-2,6-diaminopimelate = meso-2,6-diaminopimelate</text>
        <dbReference type="Rhea" id="RHEA:15393"/>
        <dbReference type="ChEBI" id="CHEBI:57609"/>
        <dbReference type="ChEBI" id="CHEBI:57791"/>
        <dbReference type="EC" id="5.1.1.7"/>
    </reaction>
</comment>
<comment type="pathway">
    <text evidence="1">Amino-acid biosynthesis; L-lysine biosynthesis via DAP pathway; DL-2,6-diaminopimelate from LL-2,6-diaminopimelate: step 1/1.</text>
</comment>
<comment type="subunit">
    <text evidence="1">Homodimer.</text>
</comment>
<comment type="subcellular location">
    <subcellularLocation>
        <location evidence="1">Cytoplasm</location>
    </subcellularLocation>
</comment>
<comment type="similarity">
    <text evidence="1">Belongs to the diaminopimelate epimerase family.</text>
</comment>
<organism>
    <name type="scientific">Brucella melitensis biotype 1 (strain ATCC 23456 / CCUG 17765 / NCTC 10094 / 16M)</name>
    <dbReference type="NCBI Taxonomy" id="224914"/>
    <lineage>
        <taxon>Bacteria</taxon>
        <taxon>Pseudomonadati</taxon>
        <taxon>Pseudomonadota</taxon>
        <taxon>Alphaproteobacteria</taxon>
        <taxon>Hyphomicrobiales</taxon>
        <taxon>Brucellaceae</taxon>
        <taxon>Brucella/Ochrobactrum group</taxon>
        <taxon>Brucella</taxon>
    </lineage>
</organism>
<name>DAPF_BRUME</name>